<comment type="function">
    <text evidence="1">RNaseP catalyzes the removal of the 5'-leader sequence from pre-tRNA to produce the mature 5'-terminus. It can also cleave other RNA substrates such as 4.5S RNA. The protein component plays an auxiliary but essential role in vivo by binding to the 5'-leader sequence and broadening the substrate specificity of the ribozyme.</text>
</comment>
<comment type="catalytic activity">
    <reaction evidence="1">
        <text>Endonucleolytic cleavage of RNA, removing 5'-extranucleotides from tRNA precursor.</text>
        <dbReference type="EC" id="3.1.26.5"/>
    </reaction>
</comment>
<comment type="subunit">
    <text evidence="1">Consists of a catalytic RNA component (M1 or rnpB) and a protein subunit.</text>
</comment>
<comment type="similarity">
    <text evidence="1">Belongs to the RnpA family.</text>
</comment>
<evidence type="ECO:0000255" key="1">
    <source>
        <dbReference type="HAMAP-Rule" id="MF_00227"/>
    </source>
</evidence>
<protein>
    <recommendedName>
        <fullName evidence="1">Ribonuclease P protein component</fullName>
        <shortName evidence="1">RNase P protein</shortName>
        <shortName evidence="1">RNaseP protein</shortName>
        <ecNumber evidence="1">3.1.26.5</ecNumber>
    </recommendedName>
    <alternativeName>
        <fullName evidence="1">Protein C5</fullName>
    </alternativeName>
</protein>
<name>RNPA_BACAC</name>
<reference key="1">
    <citation type="submission" date="2008-10" db="EMBL/GenBank/DDBJ databases">
        <title>Genome sequence of Bacillus anthracis str. CDC 684.</title>
        <authorList>
            <person name="Dodson R.J."/>
            <person name="Munk A.C."/>
            <person name="Brettin T."/>
            <person name="Bruce D."/>
            <person name="Detter C."/>
            <person name="Tapia R."/>
            <person name="Han C."/>
            <person name="Sutton G."/>
            <person name="Sims D."/>
        </authorList>
    </citation>
    <scope>NUCLEOTIDE SEQUENCE [LARGE SCALE GENOMIC DNA]</scope>
    <source>
        <strain>CDC 684 / NRRL 3495</strain>
    </source>
</reference>
<gene>
    <name evidence="1" type="primary">rnpA</name>
    <name type="ordered locus">BAMEG_5788</name>
</gene>
<keyword id="KW-0255">Endonuclease</keyword>
<keyword id="KW-0378">Hydrolase</keyword>
<keyword id="KW-0540">Nuclease</keyword>
<keyword id="KW-0694">RNA-binding</keyword>
<keyword id="KW-0819">tRNA processing</keyword>
<accession>C3LGU4</accession>
<feature type="chain" id="PRO_1000194601" description="Ribonuclease P protein component">
    <location>
        <begin position="1"/>
        <end position="119"/>
    </location>
</feature>
<proteinExistence type="inferred from homology"/>
<dbReference type="EC" id="3.1.26.5" evidence="1"/>
<dbReference type="EMBL" id="CP001215">
    <property type="protein sequence ID" value="ACP17165.1"/>
    <property type="molecule type" value="Genomic_DNA"/>
</dbReference>
<dbReference type="RefSeq" id="WP_000726628.1">
    <property type="nucleotide sequence ID" value="NC_012581.1"/>
</dbReference>
<dbReference type="SMR" id="C3LGU4"/>
<dbReference type="GeneID" id="45025315"/>
<dbReference type="KEGG" id="bah:BAMEG_5788"/>
<dbReference type="HOGENOM" id="CLU_117179_9_1_9"/>
<dbReference type="GO" id="GO:0030677">
    <property type="term" value="C:ribonuclease P complex"/>
    <property type="evidence" value="ECO:0007669"/>
    <property type="project" value="TreeGrafter"/>
</dbReference>
<dbReference type="GO" id="GO:0042781">
    <property type="term" value="F:3'-tRNA processing endoribonuclease activity"/>
    <property type="evidence" value="ECO:0007669"/>
    <property type="project" value="TreeGrafter"/>
</dbReference>
<dbReference type="GO" id="GO:0004526">
    <property type="term" value="F:ribonuclease P activity"/>
    <property type="evidence" value="ECO:0007669"/>
    <property type="project" value="UniProtKB-UniRule"/>
</dbReference>
<dbReference type="GO" id="GO:0000049">
    <property type="term" value="F:tRNA binding"/>
    <property type="evidence" value="ECO:0007669"/>
    <property type="project" value="UniProtKB-UniRule"/>
</dbReference>
<dbReference type="GO" id="GO:0001682">
    <property type="term" value="P:tRNA 5'-leader removal"/>
    <property type="evidence" value="ECO:0007669"/>
    <property type="project" value="UniProtKB-UniRule"/>
</dbReference>
<dbReference type="FunFam" id="3.30.230.10:FF:000021">
    <property type="entry name" value="Ribonuclease P protein component"/>
    <property type="match status" value="1"/>
</dbReference>
<dbReference type="Gene3D" id="3.30.230.10">
    <property type="match status" value="1"/>
</dbReference>
<dbReference type="HAMAP" id="MF_00227">
    <property type="entry name" value="RNase_P"/>
    <property type="match status" value="1"/>
</dbReference>
<dbReference type="InterPro" id="IPR020568">
    <property type="entry name" value="Ribosomal_Su5_D2-typ_SF"/>
</dbReference>
<dbReference type="InterPro" id="IPR014721">
    <property type="entry name" value="Ribsml_uS5_D2-typ_fold_subgr"/>
</dbReference>
<dbReference type="InterPro" id="IPR000100">
    <property type="entry name" value="RNase_P"/>
</dbReference>
<dbReference type="InterPro" id="IPR020539">
    <property type="entry name" value="RNase_P_CS"/>
</dbReference>
<dbReference type="NCBIfam" id="TIGR00188">
    <property type="entry name" value="rnpA"/>
    <property type="match status" value="1"/>
</dbReference>
<dbReference type="PANTHER" id="PTHR33992">
    <property type="entry name" value="RIBONUCLEASE P PROTEIN COMPONENT"/>
    <property type="match status" value="1"/>
</dbReference>
<dbReference type="PANTHER" id="PTHR33992:SF1">
    <property type="entry name" value="RIBONUCLEASE P PROTEIN COMPONENT"/>
    <property type="match status" value="1"/>
</dbReference>
<dbReference type="Pfam" id="PF00825">
    <property type="entry name" value="Ribonuclease_P"/>
    <property type="match status" value="1"/>
</dbReference>
<dbReference type="SUPFAM" id="SSF54211">
    <property type="entry name" value="Ribosomal protein S5 domain 2-like"/>
    <property type="match status" value="1"/>
</dbReference>
<dbReference type="PROSITE" id="PS00648">
    <property type="entry name" value="RIBONUCLEASE_P"/>
    <property type="match status" value="1"/>
</dbReference>
<organism>
    <name type="scientific">Bacillus anthracis (strain CDC 684 / NRRL 3495)</name>
    <dbReference type="NCBI Taxonomy" id="568206"/>
    <lineage>
        <taxon>Bacteria</taxon>
        <taxon>Bacillati</taxon>
        <taxon>Bacillota</taxon>
        <taxon>Bacilli</taxon>
        <taxon>Bacillales</taxon>
        <taxon>Bacillaceae</taxon>
        <taxon>Bacillus</taxon>
        <taxon>Bacillus cereus group</taxon>
    </lineage>
</organism>
<sequence length="119" mass="14027">MKKKHRIKKNDEFQTVFQKGKSNANRQFVVYQLDKEEQPNFRIGLSVSKKIGNAVVRNRIKRMIRQSITELKDEIDSGKDFVIIARKPCAEMTYEELKKSLIHVFKRSGMKRIKSSVRK</sequence>